<gene>
    <name evidence="1" type="primary">gltX</name>
    <name type="ordered locus">PA3134</name>
</gene>
<protein>
    <recommendedName>
        <fullName evidence="1">Glutamate--tRNA ligase</fullName>
        <ecNumber evidence="1">6.1.1.17</ecNumber>
    </recommendedName>
    <alternativeName>
        <fullName evidence="1">Glutamyl-tRNA synthetase</fullName>
        <shortName evidence="1">GluRS</shortName>
    </alternativeName>
</protein>
<reference key="1">
    <citation type="journal article" date="1999" name="J. Bacteriol.">
        <title>Cloning of the glutamyl-tRNA synthetase (gltX) gene from Pseudomonas aeruginosa.</title>
        <authorList>
            <person name="Franklund C.V."/>
            <person name="Goldberg J.B."/>
        </authorList>
    </citation>
    <scope>NUCLEOTIDE SEQUENCE [GENOMIC DNA]</scope>
    <source>
        <strain>PAK</strain>
    </source>
</reference>
<reference key="2">
    <citation type="journal article" date="2000" name="Nature">
        <title>Complete genome sequence of Pseudomonas aeruginosa PAO1, an opportunistic pathogen.</title>
        <authorList>
            <person name="Stover C.K."/>
            <person name="Pham X.-Q.T."/>
            <person name="Erwin A.L."/>
            <person name="Mizoguchi S.D."/>
            <person name="Warrener P."/>
            <person name="Hickey M.J."/>
            <person name="Brinkman F.S.L."/>
            <person name="Hufnagle W.O."/>
            <person name="Kowalik D.J."/>
            <person name="Lagrou M."/>
            <person name="Garber R.L."/>
            <person name="Goltry L."/>
            <person name="Tolentino E."/>
            <person name="Westbrock-Wadman S."/>
            <person name="Yuan Y."/>
            <person name="Brody L.L."/>
            <person name="Coulter S.N."/>
            <person name="Folger K.R."/>
            <person name="Kas A."/>
            <person name="Larbig K."/>
            <person name="Lim R.M."/>
            <person name="Smith K.A."/>
            <person name="Spencer D.H."/>
            <person name="Wong G.K.-S."/>
            <person name="Wu Z."/>
            <person name="Paulsen I.T."/>
            <person name="Reizer J."/>
            <person name="Saier M.H. Jr."/>
            <person name="Hancock R.E.W."/>
            <person name="Lory S."/>
            <person name="Olson M.V."/>
        </authorList>
    </citation>
    <scope>NUCLEOTIDE SEQUENCE [LARGE SCALE GENOMIC DNA]</scope>
    <source>
        <strain>ATCC 15692 / DSM 22644 / CIP 104116 / JCM 14847 / LMG 12228 / 1C / PRS 101 / PAO1</strain>
    </source>
</reference>
<organism>
    <name type="scientific">Pseudomonas aeruginosa (strain ATCC 15692 / DSM 22644 / CIP 104116 / JCM 14847 / LMG 12228 / 1C / PRS 101 / PAO1)</name>
    <dbReference type="NCBI Taxonomy" id="208964"/>
    <lineage>
        <taxon>Bacteria</taxon>
        <taxon>Pseudomonadati</taxon>
        <taxon>Pseudomonadota</taxon>
        <taxon>Gammaproteobacteria</taxon>
        <taxon>Pseudomonadales</taxon>
        <taxon>Pseudomonadaceae</taxon>
        <taxon>Pseudomonas</taxon>
    </lineage>
</organism>
<dbReference type="EC" id="6.1.1.17" evidence="1"/>
<dbReference type="EMBL" id="AF139107">
    <property type="protein sequence ID" value="AAD33773.1"/>
    <property type="molecule type" value="Genomic_DNA"/>
</dbReference>
<dbReference type="EMBL" id="AE004091">
    <property type="protein sequence ID" value="AAG06522.1"/>
    <property type="molecule type" value="Genomic_DNA"/>
</dbReference>
<dbReference type="PIR" id="E83254">
    <property type="entry name" value="E83254"/>
</dbReference>
<dbReference type="RefSeq" id="NP_251824.1">
    <property type="nucleotide sequence ID" value="NC_002516.2"/>
</dbReference>
<dbReference type="RefSeq" id="WP_003104596.1">
    <property type="nucleotide sequence ID" value="NZ_QZGE01000023.1"/>
</dbReference>
<dbReference type="PDB" id="5TGT">
    <property type="method" value="X-ray"/>
    <property type="resolution" value="2.45 A"/>
    <property type="chains" value="A/B=1-494"/>
</dbReference>
<dbReference type="PDB" id="8VC5">
    <property type="method" value="X-ray"/>
    <property type="resolution" value="2.30 A"/>
    <property type="chains" value="A/B=1-494"/>
</dbReference>
<dbReference type="PDBsum" id="5TGT"/>
<dbReference type="PDBsum" id="8VC5"/>
<dbReference type="SMR" id="Q9XCL6"/>
<dbReference type="FunCoup" id="Q9XCL6">
    <property type="interactions" value="752"/>
</dbReference>
<dbReference type="STRING" id="208964.PA3134"/>
<dbReference type="PaxDb" id="208964-PA3134"/>
<dbReference type="GeneID" id="882647"/>
<dbReference type="KEGG" id="pae:PA3134"/>
<dbReference type="PATRIC" id="fig|208964.12.peg.3286"/>
<dbReference type="PseudoCAP" id="PA3134"/>
<dbReference type="HOGENOM" id="CLU_015768_6_3_6"/>
<dbReference type="InParanoid" id="Q9XCL6"/>
<dbReference type="OrthoDB" id="9807503at2"/>
<dbReference type="PhylomeDB" id="Q9XCL6"/>
<dbReference type="BioCyc" id="PAER208964:G1FZ6-3194-MONOMER"/>
<dbReference type="BRENDA" id="6.1.1.17">
    <property type="organism ID" value="5087"/>
</dbReference>
<dbReference type="Proteomes" id="UP000002438">
    <property type="component" value="Chromosome"/>
</dbReference>
<dbReference type="GO" id="GO:0005829">
    <property type="term" value="C:cytosol"/>
    <property type="evidence" value="ECO:0000318"/>
    <property type="project" value="GO_Central"/>
</dbReference>
<dbReference type="GO" id="GO:0005524">
    <property type="term" value="F:ATP binding"/>
    <property type="evidence" value="ECO:0007669"/>
    <property type="project" value="UniProtKB-UniRule"/>
</dbReference>
<dbReference type="GO" id="GO:0004818">
    <property type="term" value="F:glutamate-tRNA ligase activity"/>
    <property type="evidence" value="ECO:0000318"/>
    <property type="project" value="GO_Central"/>
</dbReference>
<dbReference type="GO" id="GO:0000049">
    <property type="term" value="F:tRNA binding"/>
    <property type="evidence" value="ECO:0007669"/>
    <property type="project" value="InterPro"/>
</dbReference>
<dbReference type="GO" id="GO:0008270">
    <property type="term" value="F:zinc ion binding"/>
    <property type="evidence" value="ECO:0007669"/>
    <property type="project" value="UniProtKB-UniRule"/>
</dbReference>
<dbReference type="GO" id="GO:0006424">
    <property type="term" value="P:glutamyl-tRNA aminoacylation"/>
    <property type="evidence" value="ECO:0000318"/>
    <property type="project" value="GO_Central"/>
</dbReference>
<dbReference type="CDD" id="cd00808">
    <property type="entry name" value="GluRS_core"/>
    <property type="match status" value="1"/>
</dbReference>
<dbReference type="FunFam" id="1.10.10.350:FF:000007">
    <property type="entry name" value="Glutamate--tRNA ligase"/>
    <property type="match status" value="1"/>
</dbReference>
<dbReference type="FunFam" id="3.40.50.620:FF:000045">
    <property type="entry name" value="Glutamate--tRNA ligase, mitochondrial"/>
    <property type="match status" value="1"/>
</dbReference>
<dbReference type="Gene3D" id="1.10.10.350">
    <property type="match status" value="1"/>
</dbReference>
<dbReference type="Gene3D" id="3.40.50.620">
    <property type="entry name" value="HUPs"/>
    <property type="match status" value="1"/>
</dbReference>
<dbReference type="HAMAP" id="MF_00022">
    <property type="entry name" value="Glu_tRNA_synth_type1"/>
    <property type="match status" value="1"/>
</dbReference>
<dbReference type="InterPro" id="IPR045462">
    <property type="entry name" value="aa-tRNA-synth_I_cd-bd"/>
</dbReference>
<dbReference type="InterPro" id="IPR020751">
    <property type="entry name" value="aa-tRNA-synth_I_codon-bd_sub2"/>
</dbReference>
<dbReference type="InterPro" id="IPR001412">
    <property type="entry name" value="aa-tRNA-synth_I_CS"/>
</dbReference>
<dbReference type="InterPro" id="IPR008925">
    <property type="entry name" value="aa_tRNA-synth_I_cd-bd_sf"/>
</dbReference>
<dbReference type="InterPro" id="IPR004527">
    <property type="entry name" value="Glu-tRNA-ligase_bac/mito"/>
</dbReference>
<dbReference type="InterPro" id="IPR000924">
    <property type="entry name" value="Glu/Gln-tRNA-synth"/>
</dbReference>
<dbReference type="InterPro" id="IPR020058">
    <property type="entry name" value="Glu/Gln-tRNA-synth_Ib_cat-dom"/>
</dbReference>
<dbReference type="InterPro" id="IPR049940">
    <property type="entry name" value="GluQ/Sye"/>
</dbReference>
<dbReference type="InterPro" id="IPR033910">
    <property type="entry name" value="GluRS_core"/>
</dbReference>
<dbReference type="InterPro" id="IPR014729">
    <property type="entry name" value="Rossmann-like_a/b/a_fold"/>
</dbReference>
<dbReference type="NCBIfam" id="TIGR00464">
    <property type="entry name" value="gltX_bact"/>
    <property type="match status" value="1"/>
</dbReference>
<dbReference type="PANTHER" id="PTHR43311">
    <property type="entry name" value="GLUTAMATE--TRNA LIGASE"/>
    <property type="match status" value="1"/>
</dbReference>
<dbReference type="PANTHER" id="PTHR43311:SF2">
    <property type="entry name" value="GLUTAMATE--TRNA LIGASE, MITOCHONDRIAL-RELATED"/>
    <property type="match status" value="1"/>
</dbReference>
<dbReference type="Pfam" id="PF19269">
    <property type="entry name" value="Anticodon_2"/>
    <property type="match status" value="1"/>
</dbReference>
<dbReference type="Pfam" id="PF00749">
    <property type="entry name" value="tRNA-synt_1c"/>
    <property type="match status" value="1"/>
</dbReference>
<dbReference type="PRINTS" id="PR00987">
    <property type="entry name" value="TRNASYNTHGLU"/>
</dbReference>
<dbReference type="SUPFAM" id="SSF48163">
    <property type="entry name" value="An anticodon-binding domain of class I aminoacyl-tRNA synthetases"/>
    <property type="match status" value="1"/>
</dbReference>
<dbReference type="SUPFAM" id="SSF52374">
    <property type="entry name" value="Nucleotidylyl transferase"/>
    <property type="match status" value="1"/>
</dbReference>
<dbReference type="PROSITE" id="PS00178">
    <property type="entry name" value="AA_TRNA_LIGASE_I"/>
    <property type="match status" value="1"/>
</dbReference>
<sequence>MTTVRTRIAPSPTGDPHVGTAYIALFNLCFARQHGGQFILRIEDTDQLRSTRESEQQIYDALRWLGIEWDEGPDVGGPHGPYRQSERGHIYKKYSDELVEKGHAFTCFCTPERLDAVRAEQMARKETPRYDGHCMHLPKDEVQRRLAAGESHVTRMKVPTEGVCVVPDMLRGDVEIPWDRMDMQVLMKADGLPTYFLANVVDDHLMGITHVLRGEEWLPSAPKLIKLYEYFGWEQPQLCYMPLLRNPDKSKLSKRKNPTSITFYERMGYLPQALLNYLGRMGWSMPDEREKFTLAEMIEHFDLSRVSLGGPIFDLEKLSWLNGQWIREQSVEEFAREVQKWALNPEYLMKIAPHVQGRVENFSQIAPLAGFFFSGGVPLDASLFEHKKLDPTQVRQVLQLVLWKLESLRQWEKERITGCIQAVAEHLQLKLRDVMPLMFPAITGHASSVSVLDAMEILGADLSRYRLRQALELLGGASKKETKEWEKIRDAIPG</sequence>
<proteinExistence type="evidence at protein level"/>
<evidence type="ECO:0000255" key="1">
    <source>
        <dbReference type="HAMAP-Rule" id="MF_00022"/>
    </source>
</evidence>
<evidence type="ECO:0000305" key="2"/>
<evidence type="ECO:0007829" key="3">
    <source>
        <dbReference type="PDB" id="5TGT"/>
    </source>
</evidence>
<feature type="chain" id="PRO_0000119627" description="Glutamate--tRNA ligase">
    <location>
        <begin position="1"/>
        <end position="494"/>
    </location>
</feature>
<feature type="short sequence motif" description="'HIGH' region" evidence="1">
    <location>
        <begin position="10"/>
        <end position="20"/>
    </location>
</feature>
<feature type="short sequence motif" description="'KMSKS' region" evidence="1">
    <location>
        <begin position="251"/>
        <end position="255"/>
    </location>
</feature>
<feature type="binding site" evidence="1">
    <location>
        <position position="107"/>
    </location>
    <ligand>
        <name>Zn(2+)</name>
        <dbReference type="ChEBI" id="CHEBI:29105"/>
    </ligand>
</feature>
<feature type="binding site" evidence="1">
    <location>
        <position position="109"/>
    </location>
    <ligand>
        <name>Zn(2+)</name>
        <dbReference type="ChEBI" id="CHEBI:29105"/>
    </ligand>
</feature>
<feature type="binding site" evidence="1">
    <location>
        <position position="134"/>
    </location>
    <ligand>
        <name>Zn(2+)</name>
        <dbReference type="ChEBI" id="CHEBI:29105"/>
    </ligand>
</feature>
<feature type="binding site" evidence="1">
    <location>
        <position position="136"/>
    </location>
    <ligand>
        <name>Zn(2+)</name>
        <dbReference type="ChEBI" id="CHEBI:29105"/>
    </ligand>
</feature>
<feature type="binding site" evidence="1">
    <location>
        <position position="254"/>
    </location>
    <ligand>
        <name>ATP</name>
        <dbReference type="ChEBI" id="CHEBI:30616"/>
    </ligand>
</feature>
<feature type="sequence conflict" description="In Ref. 1; AAD33773." evidence="2" ref="1">
    <original>K</original>
    <variation>R</variation>
    <location>
        <position position="93"/>
    </location>
</feature>
<feature type="strand" evidence="3">
    <location>
        <begin position="5"/>
        <end position="8"/>
    </location>
</feature>
<feature type="strand" evidence="3">
    <location>
        <begin position="12"/>
        <end position="14"/>
    </location>
</feature>
<feature type="helix" evidence="3">
    <location>
        <begin position="18"/>
        <end position="33"/>
    </location>
</feature>
<feature type="strand" evidence="3">
    <location>
        <begin position="37"/>
        <end position="40"/>
    </location>
</feature>
<feature type="helix" evidence="3">
    <location>
        <begin position="52"/>
        <end position="65"/>
    </location>
</feature>
<feature type="strand" evidence="3">
    <location>
        <begin position="70"/>
        <end position="72"/>
    </location>
</feature>
<feature type="turn" evidence="3">
    <location>
        <begin position="73"/>
        <end position="75"/>
    </location>
</feature>
<feature type="helix" evidence="3">
    <location>
        <begin position="84"/>
        <end position="86"/>
    </location>
</feature>
<feature type="helix" evidence="3">
    <location>
        <begin position="90"/>
        <end position="100"/>
    </location>
</feature>
<feature type="strand" evidence="3">
    <location>
        <begin position="103"/>
        <end position="107"/>
    </location>
</feature>
<feature type="helix" evidence="3">
    <location>
        <begin position="139"/>
        <end position="147"/>
    </location>
</feature>
<feature type="strand" evidence="3">
    <location>
        <begin position="153"/>
        <end position="156"/>
    </location>
</feature>
<feature type="strand" evidence="3">
    <location>
        <begin position="161"/>
        <end position="168"/>
    </location>
</feature>
<feature type="turn" evidence="3">
    <location>
        <begin position="169"/>
        <end position="171"/>
    </location>
</feature>
<feature type="strand" evidence="3">
    <location>
        <begin position="172"/>
        <end position="177"/>
    </location>
</feature>
<feature type="helix" evidence="3">
    <location>
        <begin position="178"/>
        <end position="180"/>
    </location>
</feature>
<feature type="strand" evidence="3">
    <location>
        <begin position="184"/>
        <end position="187"/>
    </location>
</feature>
<feature type="helix" evidence="3">
    <location>
        <begin position="195"/>
        <end position="205"/>
    </location>
</feature>
<feature type="strand" evidence="3">
    <location>
        <begin position="210"/>
        <end position="214"/>
    </location>
</feature>
<feature type="helix" evidence="3">
    <location>
        <begin position="215"/>
        <end position="217"/>
    </location>
</feature>
<feature type="helix" evidence="3">
    <location>
        <begin position="221"/>
        <end position="231"/>
    </location>
</feature>
<feature type="strand" evidence="3">
    <location>
        <begin position="237"/>
        <end position="241"/>
    </location>
</feature>
<feature type="turn" evidence="3">
    <location>
        <begin position="254"/>
        <end position="256"/>
    </location>
</feature>
<feature type="helix" evidence="3">
    <location>
        <begin position="261"/>
        <end position="266"/>
    </location>
</feature>
<feature type="helix" evidence="3">
    <location>
        <begin position="271"/>
        <end position="282"/>
    </location>
</feature>
<feature type="helix" evidence="3">
    <location>
        <begin position="294"/>
        <end position="299"/>
    </location>
</feature>
<feature type="helix" evidence="3">
    <location>
        <begin position="303"/>
        <end position="305"/>
    </location>
</feature>
<feature type="helix" evidence="3">
    <location>
        <begin position="315"/>
        <end position="327"/>
    </location>
</feature>
<feature type="helix" evidence="3">
    <location>
        <begin position="331"/>
        <end position="341"/>
    </location>
</feature>
<feature type="helix" evidence="3">
    <location>
        <begin position="345"/>
        <end position="356"/>
    </location>
</feature>
<feature type="helix" evidence="3">
    <location>
        <begin position="362"/>
        <end position="364"/>
    </location>
</feature>
<feature type="helix" evidence="3">
    <location>
        <begin position="365"/>
        <end position="369"/>
    </location>
</feature>
<feature type="helix" evidence="3">
    <location>
        <begin position="370"/>
        <end position="372"/>
    </location>
</feature>
<feature type="strand" evidence="3">
    <location>
        <begin position="374"/>
        <end position="376"/>
    </location>
</feature>
<feature type="helix" evidence="3">
    <location>
        <begin position="381"/>
        <end position="384"/>
    </location>
</feature>
<feature type="helix" evidence="3">
    <location>
        <begin position="391"/>
        <end position="407"/>
    </location>
</feature>
<feature type="helix" evidence="3">
    <location>
        <begin position="413"/>
        <end position="426"/>
    </location>
</feature>
<feature type="helix" evidence="3">
    <location>
        <begin position="431"/>
        <end position="443"/>
    </location>
</feature>
<feature type="strand" evidence="3">
    <location>
        <begin position="444"/>
        <end position="447"/>
    </location>
</feature>
<feature type="helix" evidence="3">
    <location>
        <begin position="451"/>
        <end position="458"/>
    </location>
</feature>
<feature type="helix" evidence="3">
    <location>
        <begin position="460"/>
        <end position="474"/>
    </location>
</feature>
<feature type="helix" evidence="3">
    <location>
        <begin position="479"/>
        <end position="490"/>
    </location>
</feature>
<keyword id="KW-0002">3D-structure</keyword>
<keyword id="KW-0030">Aminoacyl-tRNA synthetase</keyword>
<keyword id="KW-0067">ATP-binding</keyword>
<keyword id="KW-0963">Cytoplasm</keyword>
<keyword id="KW-0436">Ligase</keyword>
<keyword id="KW-0479">Metal-binding</keyword>
<keyword id="KW-0547">Nucleotide-binding</keyword>
<keyword id="KW-0648">Protein biosynthesis</keyword>
<keyword id="KW-1185">Reference proteome</keyword>
<keyword id="KW-0862">Zinc</keyword>
<accession>Q9XCL6</accession>
<name>SYE_PSEAE</name>
<comment type="function">
    <text evidence="1">Catalyzes the attachment of glutamate to tRNA(Glu) in a two-step reaction: glutamate is first activated by ATP to form Glu-AMP and then transferred to the acceptor end of tRNA(Glu).</text>
</comment>
<comment type="catalytic activity">
    <reaction evidence="1">
        <text>tRNA(Glu) + L-glutamate + ATP = L-glutamyl-tRNA(Glu) + AMP + diphosphate</text>
        <dbReference type="Rhea" id="RHEA:23540"/>
        <dbReference type="Rhea" id="RHEA-COMP:9663"/>
        <dbReference type="Rhea" id="RHEA-COMP:9680"/>
        <dbReference type="ChEBI" id="CHEBI:29985"/>
        <dbReference type="ChEBI" id="CHEBI:30616"/>
        <dbReference type="ChEBI" id="CHEBI:33019"/>
        <dbReference type="ChEBI" id="CHEBI:78442"/>
        <dbReference type="ChEBI" id="CHEBI:78520"/>
        <dbReference type="ChEBI" id="CHEBI:456215"/>
        <dbReference type="EC" id="6.1.1.17"/>
    </reaction>
</comment>
<comment type="cofactor">
    <cofactor evidence="1">
        <name>Zn(2+)</name>
        <dbReference type="ChEBI" id="CHEBI:29105"/>
    </cofactor>
    <text evidence="1">Binds 1 zinc ion per subunit.</text>
</comment>
<comment type="subunit">
    <text evidence="1">Monomer.</text>
</comment>
<comment type="subcellular location">
    <subcellularLocation>
        <location evidence="1">Cytoplasm</location>
    </subcellularLocation>
</comment>
<comment type="similarity">
    <text evidence="1">Belongs to the class-I aminoacyl-tRNA synthetase family. Glutamate--tRNA ligase type 1 subfamily.</text>
</comment>